<proteinExistence type="inferred from homology"/>
<keyword id="KW-1003">Cell membrane</keyword>
<keyword id="KW-0472">Membrane</keyword>
<keyword id="KW-0677">Repeat</keyword>
<keyword id="KW-0812">Transmembrane</keyword>
<keyword id="KW-1133">Transmembrane helix</keyword>
<keyword id="KW-0813">Transport</keyword>
<evidence type="ECO:0000255" key="1">
    <source>
        <dbReference type="HAMAP-Rule" id="MF_01016"/>
    </source>
</evidence>
<reference key="1">
    <citation type="journal article" date="2008" name="PLoS Genet.">
        <title>Complete genome sequence of the N2-fixing broad host range endophyte Klebsiella pneumoniae 342 and virulence predictions verified in mice.</title>
        <authorList>
            <person name="Fouts D.E."/>
            <person name="Tyler H.L."/>
            <person name="DeBoy R.T."/>
            <person name="Daugherty S."/>
            <person name="Ren Q."/>
            <person name="Badger J.H."/>
            <person name="Durkin A.S."/>
            <person name="Huot H."/>
            <person name="Shrivastava S."/>
            <person name="Kothari S."/>
            <person name="Dodson R.J."/>
            <person name="Mohamoud Y."/>
            <person name="Khouri H."/>
            <person name="Roesch L.F.W."/>
            <person name="Krogfelt K.A."/>
            <person name="Struve C."/>
            <person name="Triplett E.W."/>
            <person name="Methe B.A."/>
        </authorList>
    </citation>
    <scope>NUCLEOTIDE SEQUENCE [LARGE SCALE GENOMIC DNA]</scope>
    <source>
        <strain>342</strain>
    </source>
</reference>
<sequence>MSEIALTVSVLALVAVVGLWIGNVKIRGVGFGIGGVLFGGIIVGHFVDQAGVALSSPMLHFIQEFGLILFVYTIGIQVGPGFFASLRVSGLRLNLFAILIVILGGLVTAVLHKLFDIPLPVVLGIFSGAVTNTPALGAGQQILRDLGVPFEVVDQMGMSYAMAYPFGICGILLTMWLVRLFFRINVEKEAQRFEESSGNGHAHLHTINVRVENPNLNQMAIQDVPMLNSDNIVCSRLKRGELLMVPAPGTLIQAGDLLHLVGRPEDLHNAQLVIGQEVATSLSTRGTDLKVERVVVTNEKVLGKKIRDLHVKQRYDVVISRLNRAGVELVASSSASLQFGDILNLVGRQEAIDAVAAELGNAQQKLQQVQMLPVFIGIGLGVLLGSIPLFIPGFPAALKLGLAGGPLIMALILGRIGSIGKLYWFMPPSANLALRELGIVLFLAVVGLKSGGDFVATLTQGEGLSWIAYGIFITAIPLLTVGILARMLAKMNYLTLCGMLAGSMTDPPALAFANNLHATSGAAALSYATVYPLVMFLRIITPQLLAVLFWGLS</sequence>
<name>Y013_KLEP3</name>
<gene>
    <name type="ordered locus">KPK_0013</name>
</gene>
<organism>
    <name type="scientific">Klebsiella pneumoniae (strain 342)</name>
    <dbReference type="NCBI Taxonomy" id="507522"/>
    <lineage>
        <taxon>Bacteria</taxon>
        <taxon>Pseudomonadati</taxon>
        <taxon>Pseudomonadota</taxon>
        <taxon>Gammaproteobacteria</taxon>
        <taxon>Enterobacterales</taxon>
        <taxon>Enterobacteriaceae</taxon>
        <taxon>Klebsiella/Raoultella group</taxon>
        <taxon>Klebsiella</taxon>
        <taxon>Klebsiella pneumoniae complex</taxon>
    </lineage>
</organism>
<feature type="chain" id="PRO_1000135212" description="Putative transport protein KPK_0013">
    <location>
        <begin position="1"/>
        <end position="553"/>
    </location>
</feature>
<feature type="transmembrane region" description="Helical" evidence="1">
    <location>
        <begin position="4"/>
        <end position="24"/>
    </location>
</feature>
<feature type="transmembrane region" description="Helical" evidence="1">
    <location>
        <begin position="28"/>
        <end position="48"/>
    </location>
</feature>
<feature type="transmembrane region" description="Helical" evidence="1">
    <location>
        <begin position="65"/>
        <end position="85"/>
    </location>
</feature>
<feature type="transmembrane region" description="Helical" evidence="1">
    <location>
        <begin position="95"/>
        <end position="115"/>
    </location>
</feature>
<feature type="transmembrane region" description="Helical" evidence="1">
    <location>
        <begin position="158"/>
        <end position="178"/>
    </location>
</feature>
<feature type="transmembrane region" description="Helical" evidence="1">
    <location>
        <begin position="371"/>
        <end position="391"/>
    </location>
</feature>
<feature type="transmembrane region" description="Helical" evidence="1">
    <location>
        <begin position="403"/>
        <end position="425"/>
    </location>
</feature>
<feature type="transmembrane region" description="Helical" evidence="1">
    <location>
        <begin position="437"/>
        <end position="457"/>
    </location>
</feature>
<feature type="transmembrane region" description="Helical" evidence="1">
    <location>
        <begin position="464"/>
        <end position="484"/>
    </location>
</feature>
<feature type="transmembrane region" description="Helical" evidence="1">
    <location>
        <begin position="493"/>
        <end position="513"/>
    </location>
</feature>
<feature type="transmembrane region" description="Helical" evidence="1">
    <location>
        <begin position="532"/>
        <end position="552"/>
    </location>
</feature>
<feature type="domain" description="RCK C-terminal 1" evidence="1">
    <location>
        <begin position="192"/>
        <end position="276"/>
    </location>
</feature>
<feature type="domain" description="RCK C-terminal 2" evidence="1">
    <location>
        <begin position="279"/>
        <end position="361"/>
    </location>
</feature>
<accession>B5XT62</accession>
<protein>
    <recommendedName>
        <fullName evidence="1">Putative transport protein KPK_0013</fullName>
    </recommendedName>
</protein>
<dbReference type="EMBL" id="CP000964">
    <property type="protein sequence ID" value="ACI09590.1"/>
    <property type="molecule type" value="Genomic_DNA"/>
</dbReference>
<dbReference type="SMR" id="B5XT62"/>
<dbReference type="KEGG" id="kpe:KPK_0013"/>
<dbReference type="HOGENOM" id="CLU_035023_3_1_6"/>
<dbReference type="BioCyc" id="KPNE507522:GI0B-12-MONOMER"/>
<dbReference type="Proteomes" id="UP000001734">
    <property type="component" value="Chromosome"/>
</dbReference>
<dbReference type="GO" id="GO:0005886">
    <property type="term" value="C:plasma membrane"/>
    <property type="evidence" value="ECO:0007669"/>
    <property type="project" value="UniProtKB-SubCell"/>
</dbReference>
<dbReference type="GO" id="GO:0008324">
    <property type="term" value="F:monoatomic cation transmembrane transporter activity"/>
    <property type="evidence" value="ECO:0007669"/>
    <property type="project" value="InterPro"/>
</dbReference>
<dbReference type="GO" id="GO:0006813">
    <property type="term" value="P:potassium ion transport"/>
    <property type="evidence" value="ECO:0007669"/>
    <property type="project" value="InterPro"/>
</dbReference>
<dbReference type="Gene3D" id="3.30.70.1450">
    <property type="entry name" value="Regulator of K+ conductance, C-terminal domain"/>
    <property type="match status" value="2"/>
</dbReference>
<dbReference type="HAMAP" id="MF_01016">
    <property type="entry name" value="YidE"/>
    <property type="match status" value="1"/>
</dbReference>
<dbReference type="InterPro" id="IPR050144">
    <property type="entry name" value="AAE_transporter"/>
</dbReference>
<dbReference type="InterPro" id="IPR006037">
    <property type="entry name" value="RCK_C"/>
</dbReference>
<dbReference type="InterPro" id="IPR036721">
    <property type="entry name" value="RCK_C_sf"/>
</dbReference>
<dbReference type="InterPro" id="IPR023018">
    <property type="entry name" value="Transpt_YidE_put"/>
</dbReference>
<dbReference type="InterPro" id="IPR006512">
    <property type="entry name" value="YidE_YbjL"/>
</dbReference>
<dbReference type="NCBIfam" id="NF003007">
    <property type="entry name" value="PRK03818.1"/>
    <property type="match status" value="1"/>
</dbReference>
<dbReference type="NCBIfam" id="TIGR01625">
    <property type="entry name" value="YidE_YbjL_dupl"/>
    <property type="match status" value="2"/>
</dbReference>
<dbReference type="PANTHER" id="PTHR30445">
    <property type="entry name" value="K(+)_H(+) ANTIPORTER SUBUNIT KHTT"/>
    <property type="match status" value="1"/>
</dbReference>
<dbReference type="PANTHER" id="PTHR30445:SF3">
    <property type="entry name" value="TRANSPORT PROTEIN YIDE-RELATED"/>
    <property type="match status" value="1"/>
</dbReference>
<dbReference type="Pfam" id="PF06826">
    <property type="entry name" value="Asp-Al_Ex"/>
    <property type="match status" value="2"/>
</dbReference>
<dbReference type="Pfam" id="PF02080">
    <property type="entry name" value="TrkA_C"/>
    <property type="match status" value="1"/>
</dbReference>
<dbReference type="SUPFAM" id="SSF116726">
    <property type="entry name" value="TrkA C-terminal domain-like"/>
    <property type="match status" value="2"/>
</dbReference>
<dbReference type="PROSITE" id="PS51202">
    <property type="entry name" value="RCK_C"/>
    <property type="match status" value="2"/>
</dbReference>
<comment type="subcellular location">
    <subcellularLocation>
        <location evidence="1">Cell membrane</location>
        <topology evidence="1">Multi-pass membrane protein</topology>
    </subcellularLocation>
</comment>
<comment type="similarity">
    <text evidence="1">Belongs to the AAE transporter (TC 2.A.81) family. YidE subfamily.</text>
</comment>